<protein>
    <recommendedName>
        <fullName evidence="1">Acetylornithine aminotransferase</fullName>
        <shortName evidence="1">ACOAT</shortName>
        <ecNumber evidence="1">2.6.1.11</ecNumber>
    </recommendedName>
</protein>
<reference key="1">
    <citation type="journal article" date="2003" name="Nature">
        <title>Genome sequence of Bacillus cereus and comparative analysis with Bacillus anthracis.</title>
        <authorList>
            <person name="Ivanova N."/>
            <person name="Sorokin A."/>
            <person name="Anderson I."/>
            <person name="Galleron N."/>
            <person name="Candelon B."/>
            <person name="Kapatral V."/>
            <person name="Bhattacharyya A."/>
            <person name="Reznik G."/>
            <person name="Mikhailova N."/>
            <person name="Lapidus A."/>
            <person name="Chu L."/>
            <person name="Mazur M."/>
            <person name="Goltsman E."/>
            <person name="Larsen N."/>
            <person name="D'Souza M."/>
            <person name="Walunas T."/>
            <person name="Grechkin Y."/>
            <person name="Pusch G."/>
            <person name="Haselkorn R."/>
            <person name="Fonstein M."/>
            <person name="Ehrlich S.D."/>
            <person name="Overbeek R."/>
            <person name="Kyrpides N.C."/>
        </authorList>
    </citation>
    <scope>NUCLEOTIDE SEQUENCE [LARGE SCALE GENOMIC DNA]</scope>
    <source>
        <strain>ATCC 14579 / DSM 31 / CCUG 7414 / JCM 2152 / NBRC 15305 / NCIMB 9373 / NCTC 2599 / NRRL B-3711</strain>
    </source>
</reference>
<accession>Q818W2</accession>
<comment type="catalytic activity">
    <reaction evidence="1">
        <text>N(2)-acetyl-L-ornithine + 2-oxoglutarate = N-acetyl-L-glutamate 5-semialdehyde + L-glutamate</text>
        <dbReference type="Rhea" id="RHEA:18049"/>
        <dbReference type="ChEBI" id="CHEBI:16810"/>
        <dbReference type="ChEBI" id="CHEBI:29123"/>
        <dbReference type="ChEBI" id="CHEBI:29985"/>
        <dbReference type="ChEBI" id="CHEBI:57805"/>
        <dbReference type="EC" id="2.6.1.11"/>
    </reaction>
</comment>
<comment type="cofactor">
    <cofactor evidence="1">
        <name>pyridoxal 5'-phosphate</name>
        <dbReference type="ChEBI" id="CHEBI:597326"/>
    </cofactor>
    <text evidence="1">Binds 1 pyridoxal phosphate per subunit.</text>
</comment>
<comment type="pathway">
    <text evidence="1">Amino-acid biosynthesis; L-arginine biosynthesis; N(2)-acetyl-L-ornithine from L-glutamate: step 4/4.</text>
</comment>
<comment type="subunit">
    <text evidence="1">Homodimer.</text>
</comment>
<comment type="subcellular location">
    <subcellularLocation>
        <location evidence="1">Cytoplasm</location>
    </subcellularLocation>
</comment>
<comment type="miscellaneous">
    <text evidence="1">May also have succinyldiaminopimelate aminotransferase activity, thus carrying out the corresponding step in lysine biosynthesis.</text>
</comment>
<comment type="similarity">
    <text evidence="1">Belongs to the class-III pyridoxal-phosphate-dependent aminotransferase family. ArgD subfamily.</text>
</comment>
<comment type="sequence caution" evidence="2">
    <conflict type="erroneous initiation">
        <sequence resource="EMBL-CDS" id="AAP11045"/>
    </conflict>
</comment>
<organism>
    <name type="scientific">Bacillus cereus (strain ATCC 14579 / DSM 31 / CCUG 7414 / JCM 2152 / NBRC 15305 / NCIMB 9373 / NCTC 2599 / NRRL B-3711)</name>
    <dbReference type="NCBI Taxonomy" id="226900"/>
    <lineage>
        <taxon>Bacteria</taxon>
        <taxon>Bacillati</taxon>
        <taxon>Bacillota</taxon>
        <taxon>Bacilli</taxon>
        <taxon>Bacillales</taxon>
        <taxon>Bacillaceae</taxon>
        <taxon>Bacillus</taxon>
        <taxon>Bacillus cereus group</taxon>
    </lineage>
</organism>
<feature type="chain" id="PRO_0000112717" description="Acetylornithine aminotransferase">
    <location>
        <begin position="1"/>
        <end position="386"/>
    </location>
</feature>
<feature type="binding site" evidence="1">
    <location>
        <begin position="96"/>
        <end position="97"/>
    </location>
    <ligand>
        <name>pyridoxal 5'-phosphate</name>
        <dbReference type="ChEBI" id="CHEBI:597326"/>
    </ligand>
</feature>
<feature type="binding site" evidence="1">
    <location>
        <position position="123"/>
    </location>
    <ligand>
        <name>pyridoxal 5'-phosphate</name>
        <dbReference type="ChEBI" id="CHEBI:597326"/>
    </ligand>
</feature>
<feature type="binding site" evidence="1">
    <location>
        <position position="126"/>
    </location>
    <ligand>
        <name>N(2)-acetyl-L-ornithine</name>
        <dbReference type="ChEBI" id="CHEBI:57805"/>
    </ligand>
</feature>
<feature type="binding site" evidence="1">
    <location>
        <begin position="208"/>
        <end position="211"/>
    </location>
    <ligand>
        <name>pyridoxal 5'-phosphate</name>
        <dbReference type="ChEBI" id="CHEBI:597326"/>
    </ligand>
</feature>
<feature type="binding site" evidence="1">
    <location>
        <position position="265"/>
    </location>
    <ligand>
        <name>N(2)-acetyl-L-ornithine</name>
        <dbReference type="ChEBI" id="CHEBI:57805"/>
    </ligand>
</feature>
<feature type="binding site" evidence="1">
    <location>
        <position position="266"/>
    </location>
    <ligand>
        <name>pyridoxal 5'-phosphate</name>
        <dbReference type="ChEBI" id="CHEBI:597326"/>
    </ligand>
</feature>
<feature type="modified residue" description="N6-(pyridoxal phosphate)lysine" evidence="1">
    <location>
        <position position="237"/>
    </location>
</feature>
<name>ARGD_BACCR</name>
<sequence length="386" mass="42060">MTSHLFQTYGRRTIEFVKGTGTKVIDNKGKEYLDFTSGIGVCNLGHCHPTVLKGVQEQLDDIWHISNLFTNSLQEEVASLLTENRALDYVFFCNSGAEANEAALKLARKHTGKSLVVTCQQSFHGRTFGTMSATGQDKVKEGFGPLLPSFLHIPFNDIKALEEVMNEEVAAVMVEVVQGEGGVIPVDLSFLKEIETLCNKFGSLFIIDEVQTGIGRTGTLFAYEQVGIEPDIVTVAKALGNGIPVGAMIGGKELGTSFTAGSHGSTFGGNYIAMAAAKEVLQVSKKPSFLKEVQEKGEYVLEKLQEELQHVECIQNIRGKGLMIGIECKHEVASFIEQLENEGLLVLQAGPNVIRLLPPLIVTNEELEQAVYIIKKVVCTKNVSII</sequence>
<evidence type="ECO:0000255" key="1">
    <source>
        <dbReference type="HAMAP-Rule" id="MF_01107"/>
    </source>
</evidence>
<evidence type="ECO:0000305" key="2"/>
<keyword id="KW-0028">Amino-acid biosynthesis</keyword>
<keyword id="KW-0032">Aminotransferase</keyword>
<keyword id="KW-0055">Arginine biosynthesis</keyword>
<keyword id="KW-0963">Cytoplasm</keyword>
<keyword id="KW-0663">Pyridoxal phosphate</keyword>
<keyword id="KW-1185">Reference proteome</keyword>
<keyword id="KW-0808">Transferase</keyword>
<proteinExistence type="inferred from homology"/>
<gene>
    <name evidence="1" type="primary">argD</name>
    <name type="ordered locus">BC_4127</name>
</gene>
<dbReference type="EC" id="2.6.1.11" evidence="1"/>
<dbReference type="EMBL" id="AE016877">
    <property type="protein sequence ID" value="AAP11045.1"/>
    <property type="status" value="ALT_INIT"/>
    <property type="molecule type" value="Genomic_DNA"/>
</dbReference>
<dbReference type="RefSeq" id="NP_833844.2">
    <property type="nucleotide sequence ID" value="NC_004722.1"/>
</dbReference>
<dbReference type="RefSeq" id="WP_000200540.1">
    <property type="nucleotide sequence ID" value="NC_004722.1"/>
</dbReference>
<dbReference type="SMR" id="Q818W2"/>
<dbReference type="STRING" id="226900.BC_4127"/>
<dbReference type="KEGG" id="bce:BC4127"/>
<dbReference type="PATRIC" id="fig|226900.8.peg.4265"/>
<dbReference type="HOGENOM" id="CLU_016922_10_1_9"/>
<dbReference type="OrthoDB" id="9807885at2"/>
<dbReference type="UniPathway" id="UPA00068">
    <property type="reaction ID" value="UER00109"/>
</dbReference>
<dbReference type="Proteomes" id="UP000001417">
    <property type="component" value="Chromosome"/>
</dbReference>
<dbReference type="GO" id="GO:0005737">
    <property type="term" value="C:cytoplasm"/>
    <property type="evidence" value="ECO:0007669"/>
    <property type="project" value="UniProtKB-SubCell"/>
</dbReference>
<dbReference type="GO" id="GO:0042802">
    <property type="term" value="F:identical protein binding"/>
    <property type="evidence" value="ECO:0000318"/>
    <property type="project" value="GO_Central"/>
</dbReference>
<dbReference type="GO" id="GO:0003992">
    <property type="term" value="F:N2-acetyl-L-ornithine:2-oxoglutarate 5-aminotransferase activity"/>
    <property type="evidence" value="ECO:0007669"/>
    <property type="project" value="UniProtKB-UniRule"/>
</dbReference>
<dbReference type="GO" id="GO:0030170">
    <property type="term" value="F:pyridoxal phosphate binding"/>
    <property type="evidence" value="ECO:0000318"/>
    <property type="project" value="GO_Central"/>
</dbReference>
<dbReference type="GO" id="GO:0006526">
    <property type="term" value="P:L-arginine biosynthetic process"/>
    <property type="evidence" value="ECO:0007669"/>
    <property type="project" value="UniProtKB-UniRule"/>
</dbReference>
<dbReference type="CDD" id="cd00610">
    <property type="entry name" value="OAT_like"/>
    <property type="match status" value="1"/>
</dbReference>
<dbReference type="FunFam" id="3.40.640.10:FF:000004">
    <property type="entry name" value="Acetylornithine aminotransferase"/>
    <property type="match status" value="1"/>
</dbReference>
<dbReference type="Gene3D" id="3.90.1150.10">
    <property type="entry name" value="Aspartate Aminotransferase, domain 1"/>
    <property type="match status" value="1"/>
</dbReference>
<dbReference type="Gene3D" id="3.40.640.10">
    <property type="entry name" value="Type I PLP-dependent aspartate aminotransferase-like (Major domain)"/>
    <property type="match status" value="1"/>
</dbReference>
<dbReference type="HAMAP" id="MF_01107">
    <property type="entry name" value="ArgD_aminotrans_3"/>
    <property type="match status" value="1"/>
</dbReference>
<dbReference type="InterPro" id="IPR004636">
    <property type="entry name" value="AcOrn/SuccOrn_fam"/>
</dbReference>
<dbReference type="InterPro" id="IPR005814">
    <property type="entry name" value="Aminotrans_3"/>
</dbReference>
<dbReference type="InterPro" id="IPR049704">
    <property type="entry name" value="Aminotrans_3_PPA_site"/>
</dbReference>
<dbReference type="InterPro" id="IPR050103">
    <property type="entry name" value="Class-III_PLP-dep_AT"/>
</dbReference>
<dbReference type="InterPro" id="IPR015424">
    <property type="entry name" value="PyrdxlP-dep_Trfase"/>
</dbReference>
<dbReference type="InterPro" id="IPR015421">
    <property type="entry name" value="PyrdxlP-dep_Trfase_major"/>
</dbReference>
<dbReference type="InterPro" id="IPR015422">
    <property type="entry name" value="PyrdxlP-dep_Trfase_small"/>
</dbReference>
<dbReference type="NCBIfam" id="TIGR00707">
    <property type="entry name" value="argD"/>
    <property type="match status" value="1"/>
</dbReference>
<dbReference type="NCBIfam" id="NF002325">
    <property type="entry name" value="PRK01278.1"/>
    <property type="match status" value="1"/>
</dbReference>
<dbReference type="NCBIfam" id="NF002797">
    <property type="entry name" value="PRK02936.1"/>
    <property type="match status" value="1"/>
</dbReference>
<dbReference type="PANTHER" id="PTHR11986:SF79">
    <property type="entry name" value="ACETYLORNITHINE AMINOTRANSFERASE, MITOCHONDRIAL"/>
    <property type="match status" value="1"/>
</dbReference>
<dbReference type="PANTHER" id="PTHR11986">
    <property type="entry name" value="AMINOTRANSFERASE CLASS III"/>
    <property type="match status" value="1"/>
</dbReference>
<dbReference type="Pfam" id="PF00202">
    <property type="entry name" value="Aminotran_3"/>
    <property type="match status" value="1"/>
</dbReference>
<dbReference type="PIRSF" id="PIRSF000521">
    <property type="entry name" value="Transaminase_4ab_Lys_Orn"/>
    <property type="match status" value="1"/>
</dbReference>
<dbReference type="SUPFAM" id="SSF53383">
    <property type="entry name" value="PLP-dependent transferases"/>
    <property type="match status" value="1"/>
</dbReference>
<dbReference type="PROSITE" id="PS00600">
    <property type="entry name" value="AA_TRANSFER_CLASS_3"/>
    <property type="match status" value="1"/>
</dbReference>